<organism>
    <name type="scientific">Periplaneta fuliginosa</name>
    <name type="common">Smokybrown cockroach</name>
    <name type="synonym">Dusky-brown cockroach</name>
    <dbReference type="NCBI Taxonomy" id="36977"/>
    <lineage>
        <taxon>Eukaryota</taxon>
        <taxon>Metazoa</taxon>
        <taxon>Ecdysozoa</taxon>
        <taxon>Arthropoda</taxon>
        <taxon>Hexapoda</taxon>
        <taxon>Insecta</taxon>
        <taxon>Pterygota</taxon>
        <taxon>Neoptera</taxon>
        <taxon>Polyneoptera</taxon>
        <taxon>Dictyoptera</taxon>
        <taxon>Blattodea</taxon>
        <taxon>Blattoidea</taxon>
        <taxon>Blattidae</taxon>
        <taxon>Blattinae</taxon>
        <taxon>Periplaneta</taxon>
    </lineage>
</organism>
<keyword id="KW-0027">Amidation</keyword>
<keyword id="KW-0903">Direct protein sequencing</keyword>
<keyword id="KW-0527">Neuropeptide</keyword>
<keyword id="KW-0964">Secreted</keyword>
<comment type="function">
    <text evidence="4">Mediates visceral muscle contractile activity (myotropic activity).</text>
</comment>
<comment type="subcellular location">
    <subcellularLocation>
        <location evidence="4">Secreted</location>
    </subcellularLocation>
</comment>
<comment type="mass spectrometry"/>
<comment type="similarity">
    <text evidence="1">Belongs to the periviscerokinin family.</text>
</comment>
<sequence>GSSSGLISMPRV</sequence>
<protein>
    <recommendedName>
        <fullName>Periviscerokinin-2.1</fullName>
    </recommendedName>
    <alternativeName>
        <fullName>Pea-PVK-2-like peptide</fullName>
    </alternativeName>
    <alternativeName>
        <fullName>Periviscerokinin-3</fullName>
        <shortName>PerFu-PVK-3</shortName>
    </alternativeName>
</protein>
<reference evidence="4" key="1">
    <citation type="journal article" date="2005" name="Peptides">
        <title>Peptidomics of neurohemal organs from species of the cockroach family Blattidae: how do neuropeptides of closely related species differ?</title>
        <authorList>
            <person name="Predel R."/>
            <person name="Gaede G."/>
        </authorList>
    </citation>
    <scope>PROTEIN SEQUENCE</scope>
    <scope>MASS SPECTROMETRY</scope>
    <scope>AMIDATION AT VAL-12</scope>
    <source>
        <tissue evidence="2">Abdominal perisympathetic organs</tissue>
    </source>
</reference>
<reference key="2">
    <citation type="journal article" date="2009" name="BMC Evol. Biol.">
        <title>A proteomic approach for studying insect phylogeny: CAPA peptides of ancient insect taxa (Dictyoptera, Blattoptera) as a test case.</title>
        <authorList>
            <person name="Roth S."/>
            <person name="Fromm B."/>
            <person name="Gaede G."/>
            <person name="Predel R."/>
        </authorList>
    </citation>
    <scope>PROTEIN SEQUENCE</scope>
    <scope>AMIDATION AT VAL-12</scope>
    <source>
        <tissue>Abdominal perisympathetic organs</tissue>
    </source>
</reference>
<name>PVK21_PERFU</name>
<dbReference type="GO" id="GO:0005576">
    <property type="term" value="C:extracellular region"/>
    <property type="evidence" value="ECO:0007669"/>
    <property type="project" value="UniProtKB-SubCell"/>
</dbReference>
<dbReference type="GO" id="GO:0007218">
    <property type="term" value="P:neuropeptide signaling pathway"/>
    <property type="evidence" value="ECO:0007669"/>
    <property type="project" value="UniProtKB-KW"/>
</dbReference>
<dbReference type="InterPro" id="IPR013231">
    <property type="entry name" value="Periviscerokinin"/>
</dbReference>
<dbReference type="Pfam" id="PF08259">
    <property type="entry name" value="Periviscerokin"/>
    <property type="match status" value="1"/>
</dbReference>
<feature type="peptide" id="PRO_0000044274" description="Periviscerokinin-2.1">
    <location>
        <begin position="1"/>
        <end position="12"/>
    </location>
</feature>
<feature type="modified residue" description="Valine amide" evidence="2 3">
    <location>
        <position position="12"/>
    </location>
</feature>
<accession>P84437</accession>
<proteinExistence type="evidence at protein level"/>
<evidence type="ECO:0000255" key="1"/>
<evidence type="ECO:0000269" key="2">
    <source>
    </source>
</evidence>
<evidence type="ECO:0000269" key="3">
    <source>
    </source>
</evidence>
<evidence type="ECO:0000305" key="4"/>